<organism>
    <name type="scientific">Desulfitobacterium hafniense (strain DSM 10664 / DCB-2)</name>
    <dbReference type="NCBI Taxonomy" id="272564"/>
    <lineage>
        <taxon>Bacteria</taxon>
        <taxon>Bacillati</taxon>
        <taxon>Bacillota</taxon>
        <taxon>Clostridia</taxon>
        <taxon>Eubacteriales</taxon>
        <taxon>Desulfitobacteriaceae</taxon>
        <taxon>Desulfitobacterium</taxon>
    </lineage>
</organism>
<reference key="1">
    <citation type="journal article" date="2012" name="BMC Microbiol.">
        <title>Genome sequence of Desulfitobacterium hafniense DCB-2, a Gram-positive anaerobe capable of dehalogenation and metal reduction.</title>
        <authorList>
            <person name="Kim S.H."/>
            <person name="Harzman C."/>
            <person name="Davis J.K."/>
            <person name="Hutcheson R."/>
            <person name="Broderick J.B."/>
            <person name="Marsh T.L."/>
            <person name="Tiedje J.M."/>
        </authorList>
    </citation>
    <scope>NUCLEOTIDE SEQUENCE [LARGE SCALE GENOMIC DNA]</scope>
    <source>
        <strain>DSM 10664 / DCB-2</strain>
    </source>
</reference>
<gene>
    <name evidence="1" type="primary">metK</name>
    <name type="ordered locus">Dhaf_3891</name>
</gene>
<sequence>MAKKLFTSESVTEGHPDKICDQISDAILDAIFAKDPNARVACETSVTTGLVLVSGEITTNCYVDIPSTVRQTIREIGYTRAKYGFDADTCAVLTSIGEQSADIALGVDRALEAKNGEMSEEEIEAIGAGDQGMMFGYATNETESYMPLAIDLAHRLARRLSEVRKSDILDYLRPDGKTQVTVEYEDNRPVRIDTIVISTQHHPEATQERIRRDLLEHVVFPVVPSELLDESTRYFINPTGRFVIGGPQGDAGLTGRKIIVDTYGGMARHGGGAFSGKDPTKVDRSAAYAARYVAKNVVAAGLAERCEIQLAYAIGVAQPVSVLVETFGTAKIDEEKIGELVKNNFDLRPAGIIKTLNLRRPIYRQTAAYGHFGRTDLDLPWEKTDKAAALREQAGL</sequence>
<keyword id="KW-0067">ATP-binding</keyword>
<keyword id="KW-0963">Cytoplasm</keyword>
<keyword id="KW-0460">Magnesium</keyword>
<keyword id="KW-0479">Metal-binding</keyword>
<keyword id="KW-0547">Nucleotide-binding</keyword>
<keyword id="KW-0554">One-carbon metabolism</keyword>
<keyword id="KW-0630">Potassium</keyword>
<keyword id="KW-0808">Transferase</keyword>
<comment type="function">
    <text evidence="1">Catalyzes the formation of S-adenosylmethionine (AdoMet) from methionine and ATP. The overall synthetic reaction is composed of two sequential steps, AdoMet formation and the subsequent tripolyphosphate hydrolysis which occurs prior to release of AdoMet from the enzyme.</text>
</comment>
<comment type="catalytic activity">
    <reaction evidence="1">
        <text>L-methionine + ATP + H2O = S-adenosyl-L-methionine + phosphate + diphosphate</text>
        <dbReference type="Rhea" id="RHEA:21080"/>
        <dbReference type="ChEBI" id="CHEBI:15377"/>
        <dbReference type="ChEBI" id="CHEBI:30616"/>
        <dbReference type="ChEBI" id="CHEBI:33019"/>
        <dbReference type="ChEBI" id="CHEBI:43474"/>
        <dbReference type="ChEBI" id="CHEBI:57844"/>
        <dbReference type="ChEBI" id="CHEBI:59789"/>
        <dbReference type="EC" id="2.5.1.6"/>
    </reaction>
</comment>
<comment type="cofactor">
    <cofactor evidence="1">
        <name>Mg(2+)</name>
        <dbReference type="ChEBI" id="CHEBI:18420"/>
    </cofactor>
    <text evidence="1">Binds 2 divalent ions per subunit.</text>
</comment>
<comment type="cofactor">
    <cofactor evidence="1">
        <name>K(+)</name>
        <dbReference type="ChEBI" id="CHEBI:29103"/>
    </cofactor>
    <text evidence="1">Binds 1 potassium ion per subunit.</text>
</comment>
<comment type="pathway">
    <text evidence="1">Amino-acid biosynthesis; S-adenosyl-L-methionine biosynthesis; S-adenosyl-L-methionine from L-methionine: step 1/1.</text>
</comment>
<comment type="subunit">
    <text evidence="1">Homotetramer; dimer of dimers.</text>
</comment>
<comment type="subcellular location">
    <subcellularLocation>
        <location evidence="1">Cytoplasm</location>
    </subcellularLocation>
</comment>
<comment type="similarity">
    <text evidence="1">Belongs to the AdoMet synthase family.</text>
</comment>
<proteinExistence type="inferred from homology"/>
<dbReference type="EC" id="2.5.1.6" evidence="1"/>
<dbReference type="EMBL" id="CP001336">
    <property type="protein sequence ID" value="ACL21907.1"/>
    <property type="molecule type" value="Genomic_DNA"/>
</dbReference>
<dbReference type="RefSeq" id="WP_015944866.1">
    <property type="nucleotide sequence ID" value="NC_011830.1"/>
</dbReference>
<dbReference type="SMR" id="B8FSB9"/>
<dbReference type="KEGG" id="dhd:Dhaf_3891"/>
<dbReference type="HOGENOM" id="CLU_041802_1_1_9"/>
<dbReference type="UniPathway" id="UPA00315">
    <property type="reaction ID" value="UER00080"/>
</dbReference>
<dbReference type="Proteomes" id="UP000007726">
    <property type="component" value="Chromosome"/>
</dbReference>
<dbReference type="GO" id="GO:0005737">
    <property type="term" value="C:cytoplasm"/>
    <property type="evidence" value="ECO:0007669"/>
    <property type="project" value="UniProtKB-SubCell"/>
</dbReference>
<dbReference type="GO" id="GO:0005524">
    <property type="term" value="F:ATP binding"/>
    <property type="evidence" value="ECO:0007669"/>
    <property type="project" value="UniProtKB-UniRule"/>
</dbReference>
<dbReference type="GO" id="GO:0000287">
    <property type="term" value="F:magnesium ion binding"/>
    <property type="evidence" value="ECO:0007669"/>
    <property type="project" value="UniProtKB-UniRule"/>
</dbReference>
<dbReference type="GO" id="GO:0004478">
    <property type="term" value="F:methionine adenosyltransferase activity"/>
    <property type="evidence" value="ECO:0007669"/>
    <property type="project" value="UniProtKB-UniRule"/>
</dbReference>
<dbReference type="GO" id="GO:0006730">
    <property type="term" value="P:one-carbon metabolic process"/>
    <property type="evidence" value="ECO:0007669"/>
    <property type="project" value="UniProtKB-KW"/>
</dbReference>
<dbReference type="GO" id="GO:0006556">
    <property type="term" value="P:S-adenosylmethionine biosynthetic process"/>
    <property type="evidence" value="ECO:0007669"/>
    <property type="project" value="UniProtKB-UniRule"/>
</dbReference>
<dbReference type="CDD" id="cd18079">
    <property type="entry name" value="S-AdoMet_synt"/>
    <property type="match status" value="1"/>
</dbReference>
<dbReference type="FunFam" id="3.30.300.10:FF:000003">
    <property type="entry name" value="S-adenosylmethionine synthase"/>
    <property type="match status" value="1"/>
</dbReference>
<dbReference type="FunFam" id="3.30.300.10:FF:000004">
    <property type="entry name" value="S-adenosylmethionine synthase"/>
    <property type="match status" value="1"/>
</dbReference>
<dbReference type="Gene3D" id="3.30.300.10">
    <property type="match status" value="3"/>
</dbReference>
<dbReference type="HAMAP" id="MF_00086">
    <property type="entry name" value="S_AdoMet_synth1"/>
    <property type="match status" value="1"/>
</dbReference>
<dbReference type="InterPro" id="IPR022631">
    <property type="entry name" value="ADOMET_SYNTHASE_CS"/>
</dbReference>
<dbReference type="InterPro" id="IPR022630">
    <property type="entry name" value="S-AdoMet_synt_C"/>
</dbReference>
<dbReference type="InterPro" id="IPR022629">
    <property type="entry name" value="S-AdoMet_synt_central"/>
</dbReference>
<dbReference type="InterPro" id="IPR022628">
    <property type="entry name" value="S-AdoMet_synt_N"/>
</dbReference>
<dbReference type="InterPro" id="IPR002133">
    <property type="entry name" value="S-AdoMet_synthetase"/>
</dbReference>
<dbReference type="InterPro" id="IPR022636">
    <property type="entry name" value="S-AdoMet_synthetase_sfam"/>
</dbReference>
<dbReference type="NCBIfam" id="TIGR01034">
    <property type="entry name" value="metK"/>
    <property type="match status" value="1"/>
</dbReference>
<dbReference type="PANTHER" id="PTHR11964">
    <property type="entry name" value="S-ADENOSYLMETHIONINE SYNTHETASE"/>
    <property type="match status" value="1"/>
</dbReference>
<dbReference type="Pfam" id="PF02773">
    <property type="entry name" value="S-AdoMet_synt_C"/>
    <property type="match status" value="1"/>
</dbReference>
<dbReference type="Pfam" id="PF02772">
    <property type="entry name" value="S-AdoMet_synt_M"/>
    <property type="match status" value="1"/>
</dbReference>
<dbReference type="Pfam" id="PF00438">
    <property type="entry name" value="S-AdoMet_synt_N"/>
    <property type="match status" value="1"/>
</dbReference>
<dbReference type="PIRSF" id="PIRSF000497">
    <property type="entry name" value="MAT"/>
    <property type="match status" value="1"/>
</dbReference>
<dbReference type="SUPFAM" id="SSF55973">
    <property type="entry name" value="S-adenosylmethionine synthetase"/>
    <property type="match status" value="3"/>
</dbReference>
<dbReference type="PROSITE" id="PS00376">
    <property type="entry name" value="ADOMET_SYNTHASE_1"/>
    <property type="match status" value="1"/>
</dbReference>
<dbReference type="PROSITE" id="PS00377">
    <property type="entry name" value="ADOMET_SYNTHASE_2"/>
    <property type="match status" value="1"/>
</dbReference>
<accession>B8FSB9</accession>
<evidence type="ECO:0000255" key="1">
    <source>
        <dbReference type="HAMAP-Rule" id="MF_00086"/>
    </source>
</evidence>
<feature type="chain" id="PRO_1000196703" description="S-adenosylmethionine synthase">
    <location>
        <begin position="1"/>
        <end position="396"/>
    </location>
</feature>
<feature type="region of interest" description="Flexible loop" evidence="1">
    <location>
        <begin position="99"/>
        <end position="109"/>
    </location>
</feature>
<feature type="binding site" description="in other chain" evidence="1">
    <location>
        <position position="15"/>
    </location>
    <ligand>
        <name>ATP</name>
        <dbReference type="ChEBI" id="CHEBI:30616"/>
        <note>ligand shared between two neighboring subunits</note>
    </ligand>
</feature>
<feature type="binding site" evidence="1">
    <location>
        <position position="17"/>
    </location>
    <ligand>
        <name>Mg(2+)</name>
        <dbReference type="ChEBI" id="CHEBI:18420"/>
    </ligand>
</feature>
<feature type="binding site" evidence="1">
    <location>
        <position position="43"/>
    </location>
    <ligand>
        <name>K(+)</name>
        <dbReference type="ChEBI" id="CHEBI:29103"/>
    </ligand>
</feature>
<feature type="binding site" description="in other chain" evidence="1">
    <location>
        <position position="56"/>
    </location>
    <ligand>
        <name>L-methionine</name>
        <dbReference type="ChEBI" id="CHEBI:57844"/>
        <note>ligand shared between two neighboring subunits</note>
    </ligand>
</feature>
<feature type="binding site" description="in other chain" evidence="1">
    <location>
        <position position="99"/>
    </location>
    <ligand>
        <name>L-methionine</name>
        <dbReference type="ChEBI" id="CHEBI:57844"/>
        <note>ligand shared between two neighboring subunits</note>
    </ligand>
</feature>
<feature type="binding site" description="in other chain" evidence="1">
    <location>
        <begin position="175"/>
        <end position="177"/>
    </location>
    <ligand>
        <name>ATP</name>
        <dbReference type="ChEBI" id="CHEBI:30616"/>
        <note>ligand shared between two neighboring subunits</note>
    </ligand>
</feature>
<feature type="binding site" description="in other chain" evidence="1">
    <location>
        <begin position="241"/>
        <end position="242"/>
    </location>
    <ligand>
        <name>ATP</name>
        <dbReference type="ChEBI" id="CHEBI:30616"/>
        <note>ligand shared between two neighboring subunits</note>
    </ligand>
</feature>
<feature type="binding site" evidence="1">
    <location>
        <position position="250"/>
    </location>
    <ligand>
        <name>ATP</name>
        <dbReference type="ChEBI" id="CHEBI:30616"/>
        <note>ligand shared between two neighboring subunits</note>
    </ligand>
</feature>
<feature type="binding site" evidence="1">
    <location>
        <position position="250"/>
    </location>
    <ligand>
        <name>L-methionine</name>
        <dbReference type="ChEBI" id="CHEBI:57844"/>
        <note>ligand shared between two neighboring subunits</note>
    </ligand>
</feature>
<feature type="binding site" description="in other chain" evidence="1">
    <location>
        <begin position="256"/>
        <end position="257"/>
    </location>
    <ligand>
        <name>ATP</name>
        <dbReference type="ChEBI" id="CHEBI:30616"/>
        <note>ligand shared between two neighboring subunits</note>
    </ligand>
</feature>
<feature type="binding site" evidence="1">
    <location>
        <position position="273"/>
    </location>
    <ligand>
        <name>ATP</name>
        <dbReference type="ChEBI" id="CHEBI:30616"/>
        <note>ligand shared between two neighboring subunits</note>
    </ligand>
</feature>
<feature type="binding site" evidence="1">
    <location>
        <position position="277"/>
    </location>
    <ligand>
        <name>ATP</name>
        <dbReference type="ChEBI" id="CHEBI:30616"/>
        <note>ligand shared between two neighboring subunits</note>
    </ligand>
</feature>
<feature type="binding site" description="in other chain" evidence="1">
    <location>
        <position position="281"/>
    </location>
    <ligand>
        <name>L-methionine</name>
        <dbReference type="ChEBI" id="CHEBI:57844"/>
        <note>ligand shared between two neighboring subunits</note>
    </ligand>
</feature>
<protein>
    <recommendedName>
        <fullName evidence="1">S-adenosylmethionine synthase</fullName>
        <shortName evidence="1">AdoMet synthase</shortName>
        <ecNumber evidence="1">2.5.1.6</ecNumber>
    </recommendedName>
    <alternativeName>
        <fullName evidence="1">MAT</fullName>
    </alternativeName>
    <alternativeName>
        <fullName evidence="1">Methionine adenosyltransferase</fullName>
    </alternativeName>
</protein>
<name>METK_DESHD</name>